<evidence type="ECO:0000255" key="1">
    <source>
        <dbReference type="HAMAP-Rule" id="MF_01394"/>
    </source>
</evidence>
<proteinExistence type="inferred from homology"/>
<organism>
    <name type="scientific">Desulfitobacterium hafniense (strain Y51)</name>
    <dbReference type="NCBI Taxonomy" id="138119"/>
    <lineage>
        <taxon>Bacteria</taxon>
        <taxon>Bacillati</taxon>
        <taxon>Bacillota</taxon>
        <taxon>Clostridia</taxon>
        <taxon>Eubacteriales</taxon>
        <taxon>Desulfitobacteriaceae</taxon>
        <taxon>Desulfitobacterium</taxon>
    </lineage>
</organism>
<keyword id="KW-1003">Cell membrane</keyword>
<keyword id="KW-0472">Membrane</keyword>
<keyword id="KW-0520">NAD</keyword>
<keyword id="KW-0874">Quinone</keyword>
<keyword id="KW-1185">Reference proteome</keyword>
<keyword id="KW-1278">Translocase</keyword>
<keyword id="KW-0812">Transmembrane</keyword>
<keyword id="KW-1133">Transmembrane helix</keyword>
<keyword id="KW-0813">Transport</keyword>
<reference key="1">
    <citation type="journal article" date="2006" name="J. Bacteriol.">
        <title>Complete genome sequence of the dehalorespiring bacterium Desulfitobacterium hafniense Y51 and comparison with Dehalococcoides ethenogenes 195.</title>
        <authorList>
            <person name="Nonaka H."/>
            <person name="Keresztes G."/>
            <person name="Shinoda Y."/>
            <person name="Ikenaga Y."/>
            <person name="Abe M."/>
            <person name="Naito K."/>
            <person name="Inatomi K."/>
            <person name="Furukawa K."/>
            <person name="Inui M."/>
            <person name="Yukawa H."/>
        </authorList>
    </citation>
    <scope>NUCLEOTIDE SEQUENCE [LARGE SCALE GENOMIC DNA]</scope>
    <source>
        <strain>Y51</strain>
    </source>
</reference>
<sequence>MSDNFAAVGIALVVAIAINLIMMLMPKLLAPKKPVPEKLTPYEGGNQTIGRTWLGFKSNYFLYALVFTAFDVETVFLFPWALSFRQLGTFAFIEMFVFIVILLVGFWYAWKEGALEWM</sequence>
<feature type="chain" id="PRO_0000362672" description="NADH-quinone oxidoreductase subunit A">
    <location>
        <begin position="1"/>
        <end position="118"/>
    </location>
</feature>
<feature type="transmembrane region" description="Helical" evidence="1">
    <location>
        <begin position="5"/>
        <end position="25"/>
    </location>
</feature>
<feature type="transmembrane region" description="Helical" evidence="1">
    <location>
        <begin position="61"/>
        <end position="81"/>
    </location>
</feature>
<feature type="transmembrane region" description="Helical" evidence="1">
    <location>
        <begin position="90"/>
        <end position="110"/>
    </location>
</feature>
<comment type="function">
    <text evidence="1">NDH-1 shuttles electrons from NADH, via FMN and iron-sulfur (Fe-S) centers, to quinones in the respiratory chain. The immediate electron acceptor for the enzyme in this species is believed to be a menaquinone. Couples the redox reaction to proton translocation (for every two electrons transferred, four hydrogen ions are translocated across the cytoplasmic membrane), and thus conserves the redox energy in a proton gradient.</text>
</comment>
<comment type="catalytic activity">
    <reaction evidence="1">
        <text>a quinone + NADH + 5 H(+)(in) = a quinol + NAD(+) + 4 H(+)(out)</text>
        <dbReference type="Rhea" id="RHEA:57888"/>
        <dbReference type="ChEBI" id="CHEBI:15378"/>
        <dbReference type="ChEBI" id="CHEBI:24646"/>
        <dbReference type="ChEBI" id="CHEBI:57540"/>
        <dbReference type="ChEBI" id="CHEBI:57945"/>
        <dbReference type="ChEBI" id="CHEBI:132124"/>
    </reaction>
</comment>
<comment type="subunit">
    <text evidence="1">NDH-1 is composed of 14 different subunits. Subunits NuoA, H, J, K, L, M, N constitute the membrane sector of the complex.</text>
</comment>
<comment type="subcellular location">
    <subcellularLocation>
        <location evidence="1">Cell membrane</location>
        <topology evidence="1">Multi-pass membrane protein</topology>
    </subcellularLocation>
</comment>
<comment type="similarity">
    <text evidence="1">Belongs to the complex I subunit 3 family.</text>
</comment>
<accession>Q24UB5</accession>
<name>NUOA_DESHY</name>
<gene>
    <name evidence="1" type="primary">nuoA</name>
    <name type="ordered locus">DSY2588</name>
</gene>
<protein>
    <recommendedName>
        <fullName evidence="1">NADH-quinone oxidoreductase subunit A</fullName>
        <ecNumber evidence="1">7.1.1.-</ecNumber>
    </recommendedName>
    <alternativeName>
        <fullName evidence="1">NADH dehydrogenase I subunit A</fullName>
    </alternativeName>
    <alternativeName>
        <fullName evidence="1">NDH-1 subunit A</fullName>
    </alternativeName>
    <alternativeName>
        <fullName evidence="1">NUO1</fullName>
    </alternativeName>
</protein>
<dbReference type="EC" id="7.1.1.-" evidence="1"/>
<dbReference type="EMBL" id="AP008230">
    <property type="protein sequence ID" value="BAE84377.1"/>
    <property type="molecule type" value="Genomic_DNA"/>
</dbReference>
<dbReference type="RefSeq" id="WP_011460440.1">
    <property type="nucleotide sequence ID" value="NC_007907.1"/>
</dbReference>
<dbReference type="SMR" id="Q24UB5"/>
<dbReference type="STRING" id="138119.DSY2588"/>
<dbReference type="KEGG" id="dsy:DSY2588"/>
<dbReference type="eggNOG" id="COG0838">
    <property type="taxonomic scope" value="Bacteria"/>
</dbReference>
<dbReference type="HOGENOM" id="CLU_119549_1_1_9"/>
<dbReference type="Proteomes" id="UP000001946">
    <property type="component" value="Chromosome"/>
</dbReference>
<dbReference type="GO" id="GO:0030964">
    <property type="term" value="C:NADH dehydrogenase complex"/>
    <property type="evidence" value="ECO:0007669"/>
    <property type="project" value="TreeGrafter"/>
</dbReference>
<dbReference type="GO" id="GO:0005886">
    <property type="term" value="C:plasma membrane"/>
    <property type="evidence" value="ECO:0007669"/>
    <property type="project" value="UniProtKB-SubCell"/>
</dbReference>
<dbReference type="GO" id="GO:0008137">
    <property type="term" value="F:NADH dehydrogenase (ubiquinone) activity"/>
    <property type="evidence" value="ECO:0007669"/>
    <property type="project" value="InterPro"/>
</dbReference>
<dbReference type="GO" id="GO:0050136">
    <property type="term" value="F:NADH:ubiquinone reductase (non-electrogenic) activity"/>
    <property type="evidence" value="ECO:0007669"/>
    <property type="project" value="UniProtKB-UniRule"/>
</dbReference>
<dbReference type="GO" id="GO:0048038">
    <property type="term" value="F:quinone binding"/>
    <property type="evidence" value="ECO:0007669"/>
    <property type="project" value="UniProtKB-KW"/>
</dbReference>
<dbReference type="Gene3D" id="1.20.58.1610">
    <property type="entry name" value="NADH:ubiquinone/plastoquinone oxidoreductase, chain 3"/>
    <property type="match status" value="1"/>
</dbReference>
<dbReference type="HAMAP" id="MF_01394">
    <property type="entry name" value="NDH1_NuoA"/>
    <property type="match status" value="1"/>
</dbReference>
<dbReference type="InterPro" id="IPR023043">
    <property type="entry name" value="NAD(P)H_OxRDtase_bac/plastid"/>
</dbReference>
<dbReference type="InterPro" id="IPR000440">
    <property type="entry name" value="NADH_UbQ/plastoQ_OxRdtase_su3"/>
</dbReference>
<dbReference type="InterPro" id="IPR038430">
    <property type="entry name" value="NDAH_ubi_oxred_su3_sf"/>
</dbReference>
<dbReference type="PANTHER" id="PTHR11058">
    <property type="entry name" value="NADH-UBIQUINONE OXIDOREDUCTASE CHAIN 3"/>
    <property type="match status" value="1"/>
</dbReference>
<dbReference type="PANTHER" id="PTHR11058:SF9">
    <property type="entry name" value="NADH-UBIQUINONE OXIDOREDUCTASE CHAIN 3"/>
    <property type="match status" value="1"/>
</dbReference>
<dbReference type="Pfam" id="PF00507">
    <property type="entry name" value="Oxidored_q4"/>
    <property type="match status" value="1"/>
</dbReference>